<keyword id="KW-0227">DNA damage</keyword>
<keyword id="KW-0234">DNA repair</keyword>
<keyword id="KW-0238">DNA-binding</keyword>
<keyword id="KW-0326">Glycosidase</keyword>
<keyword id="KW-0378">Hydrolase</keyword>
<keyword id="KW-0456">Lyase</keyword>
<keyword id="KW-0479">Metal-binding</keyword>
<keyword id="KW-0511">Multifunctional enzyme</keyword>
<keyword id="KW-0862">Zinc</keyword>
<keyword id="KW-0863">Zinc-finger</keyword>
<proteinExistence type="inferred from homology"/>
<accession>Q39CU4</accession>
<reference key="1">
    <citation type="submission" date="2005-10" db="EMBL/GenBank/DDBJ databases">
        <title>Complete sequence of chromosome 1 of Burkholderia sp. 383.</title>
        <authorList>
            <consortium name="US DOE Joint Genome Institute"/>
            <person name="Copeland A."/>
            <person name="Lucas S."/>
            <person name="Lapidus A."/>
            <person name="Barry K."/>
            <person name="Detter J.C."/>
            <person name="Glavina T."/>
            <person name="Hammon N."/>
            <person name="Israni S."/>
            <person name="Pitluck S."/>
            <person name="Chain P."/>
            <person name="Malfatti S."/>
            <person name="Shin M."/>
            <person name="Vergez L."/>
            <person name="Schmutz J."/>
            <person name="Larimer F."/>
            <person name="Land M."/>
            <person name="Kyrpides N."/>
            <person name="Lykidis A."/>
            <person name="Richardson P."/>
        </authorList>
    </citation>
    <scope>NUCLEOTIDE SEQUENCE [LARGE SCALE GENOMIC DNA]</scope>
    <source>
        <strain>ATCC 17760 / DSM 23089 / LMG 22485 / NCIMB 9086 / R18194 / 383</strain>
    </source>
</reference>
<comment type="function">
    <text evidence="2">Involved in base excision repair of DNA damaged by oxidation or by mutagenic agents. Acts as a DNA glycosylase that recognizes and removes damaged bases. Has a preference for oxidized purines, such as 7,8-dihydro-8-oxoguanine (8-oxoG). Has AP (apurinic/apyrimidinic) lyase activity and introduces nicks in the DNA strand. Cleaves the DNA backbone by beta-delta elimination to generate a single-strand break at the site of the removed base with both 3'- and 5'-phosphates.</text>
</comment>
<comment type="catalytic activity">
    <reaction evidence="2">
        <text>Hydrolysis of DNA containing ring-opened 7-methylguanine residues, releasing 2,6-diamino-4-hydroxy-5-(N-methyl)formamidopyrimidine.</text>
        <dbReference type="EC" id="3.2.2.23"/>
    </reaction>
</comment>
<comment type="catalytic activity">
    <reaction evidence="2">
        <text>2'-deoxyribonucleotide-(2'-deoxyribose 5'-phosphate)-2'-deoxyribonucleotide-DNA = a 3'-end 2'-deoxyribonucleotide-(2,3-dehydro-2,3-deoxyribose 5'-phosphate)-DNA + a 5'-end 5'-phospho-2'-deoxyribonucleoside-DNA + H(+)</text>
        <dbReference type="Rhea" id="RHEA:66592"/>
        <dbReference type="Rhea" id="RHEA-COMP:13180"/>
        <dbReference type="Rhea" id="RHEA-COMP:16897"/>
        <dbReference type="Rhea" id="RHEA-COMP:17067"/>
        <dbReference type="ChEBI" id="CHEBI:15378"/>
        <dbReference type="ChEBI" id="CHEBI:136412"/>
        <dbReference type="ChEBI" id="CHEBI:157695"/>
        <dbReference type="ChEBI" id="CHEBI:167181"/>
        <dbReference type="EC" id="4.2.99.18"/>
    </reaction>
</comment>
<comment type="cofactor">
    <cofactor evidence="2">
        <name>Zn(2+)</name>
        <dbReference type="ChEBI" id="CHEBI:29105"/>
    </cofactor>
    <text evidence="2">Binds 1 zinc ion per subunit.</text>
</comment>
<comment type="subunit">
    <text evidence="2">Monomer.</text>
</comment>
<comment type="similarity">
    <text evidence="2">Belongs to the FPG family.</text>
</comment>
<sequence length="275" mass="30577">MPELPEVEVTRRGIEPFVAGRRVERVDVRTEMLRWPVPAGLAEQLRAREVLAVERRGKYLLFEVDAGWFIVHLGMTGTLRVLPADGLPVAAKHDHIDWIFDEFVLRFRDPRRFGAVLWHPREAGDVHAHPLLASLGVEPFSPAFTGALLHARTRGRTVSVKQALLAGDMVVGVGNIYASESLFRAGIRPTTAAGKVSLPRYERLADAVRATLADAIERGGSTLRDFVGSNGESGYFQLDCFVYDRAGQPCRVCNTPIRQIVQGQRSTYFCPTCQR</sequence>
<gene>
    <name evidence="2" type="primary">mutM</name>
    <name evidence="2" type="synonym">fpg</name>
    <name type="ordered locus">Bcep18194_A6128</name>
</gene>
<feature type="initiator methionine" description="Removed" evidence="1">
    <location>
        <position position="1"/>
    </location>
</feature>
<feature type="chain" id="PRO_0000228424" description="Formamidopyrimidine-DNA glycosylase">
    <location>
        <begin position="2"/>
        <end position="275"/>
    </location>
</feature>
<feature type="zinc finger region" description="FPG-type" evidence="2">
    <location>
        <begin position="241"/>
        <end position="275"/>
    </location>
</feature>
<feature type="active site" description="Schiff-base intermediate with DNA" evidence="2">
    <location>
        <position position="2"/>
    </location>
</feature>
<feature type="active site" description="Proton donor" evidence="2">
    <location>
        <position position="3"/>
    </location>
</feature>
<feature type="active site" description="Proton donor; for beta-elimination activity" evidence="2">
    <location>
        <position position="58"/>
    </location>
</feature>
<feature type="active site" description="Proton donor; for delta-elimination activity" evidence="2">
    <location>
        <position position="265"/>
    </location>
</feature>
<feature type="binding site" evidence="2">
    <location>
        <position position="93"/>
    </location>
    <ligand>
        <name>DNA</name>
        <dbReference type="ChEBI" id="CHEBI:16991"/>
    </ligand>
</feature>
<feature type="binding site" evidence="2">
    <location>
        <position position="111"/>
    </location>
    <ligand>
        <name>DNA</name>
        <dbReference type="ChEBI" id="CHEBI:16991"/>
    </ligand>
</feature>
<feature type="binding site" evidence="2">
    <location>
        <position position="156"/>
    </location>
    <ligand>
        <name>DNA</name>
        <dbReference type="ChEBI" id="CHEBI:16991"/>
    </ligand>
</feature>
<name>FPG_BURL3</name>
<evidence type="ECO:0000250" key="1"/>
<evidence type="ECO:0000255" key="2">
    <source>
        <dbReference type="HAMAP-Rule" id="MF_00103"/>
    </source>
</evidence>
<dbReference type="EC" id="3.2.2.23" evidence="2"/>
<dbReference type="EC" id="4.2.99.18" evidence="2"/>
<dbReference type="EMBL" id="CP000151">
    <property type="protein sequence ID" value="ABB09722.1"/>
    <property type="molecule type" value="Genomic_DNA"/>
</dbReference>
<dbReference type="RefSeq" id="WP_011353231.1">
    <property type="nucleotide sequence ID" value="NC_007510.1"/>
</dbReference>
<dbReference type="SMR" id="Q39CU4"/>
<dbReference type="GeneID" id="45096009"/>
<dbReference type="KEGG" id="bur:Bcep18194_A6128"/>
<dbReference type="PATRIC" id="fig|482957.22.peg.3133"/>
<dbReference type="HOGENOM" id="CLU_038423_1_1_4"/>
<dbReference type="Proteomes" id="UP000002705">
    <property type="component" value="Chromosome 1"/>
</dbReference>
<dbReference type="GO" id="GO:0034039">
    <property type="term" value="F:8-oxo-7,8-dihydroguanine DNA N-glycosylase activity"/>
    <property type="evidence" value="ECO:0007669"/>
    <property type="project" value="TreeGrafter"/>
</dbReference>
<dbReference type="GO" id="GO:0140078">
    <property type="term" value="F:class I DNA-(apurinic or apyrimidinic site) endonuclease activity"/>
    <property type="evidence" value="ECO:0007669"/>
    <property type="project" value="UniProtKB-EC"/>
</dbReference>
<dbReference type="GO" id="GO:0003684">
    <property type="term" value="F:damaged DNA binding"/>
    <property type="evidence" value="ECO:0007669"/>
    <property type="project" value="InterPro"/>
</dbReference>
<dbReference type="GO" id="GO:0008270">
    <property type="term" value="F:zinc ion binding"/>
    <property type="evidence" value="ECO:0007669"/>
    <property type="project" value="UniProtKB-UniRule"/>
</dbReference>
<dbReference type="GO" id="GO:0006284">
    <property type="term" value="P:base-excision repair"/>
    <property type="evidence" value="ECO:0007669"/>
    <property type="project" value="InterPro"/>
</dbReference>
<dbReference type="CDD" id="cd08966">
    <property type="entry name" value="EcFpg-like_N"/>
    <property type="match status" value="1"/>
</dbReference>
<dbReference type="FunFam" id="1.10.8.50:FF:000003">
    <property type="entry name" value="Formamidopyrimidine-DNA glycosylase"/>
    <property type="match status" value="1"/>
</dbReference>
<dbReference type="Gene3D" id="1.10.8.50">
    <property type="match status" value="1"/>
</dbReference>
<dbReference type="Gene3D" id="3.20.190.10">
    <property type="entry name" value="MutM-like, N-terminal"/>
    <property type="match status" value="1"/>
</dbReference>
<dbReference type="HAMAP" id="MF_00103">
    <property type="entry name" value="Fapy_DNA_glycosyl"/>
    <property type="match status" value="1"/>
</dbReference>
<dbReference type="InterPro" id="IPR015886">
    <property type="entry name" value="DNA_glyclase/AP_lyase_DNA-bd"/>
</dbReference>
<dbReference type="InterPro" id="IPR015887">
    <property type="entry name" value="DNA_glyclase_Znf_dom_DNA_BS"/>
</dbReference>
<dbReference type="InterPro" id="IPR020629">
    <property type="entry name" value="Formamido-pyr_DNA_Glyclase"/>
</dbReference>
<dbReference type="InterPro" id="IPR012319">
    <property type="entry name" value="FPG_cat"/>
</dbReference>
<dbReference type="InterPro" id="IPR035937">
    <property type="entry name" value="MutM-like_N-ter"/>
</dbReference>
<dbReference type="InterPro" id="IPR010979">
    <property type="entry name" value="Ribosomal_uS13-like_H2TH"/>
</dbReference>
<dbReference type="InterPro" id="IPR000214">
    <property type="entry name" value="Znf_DNA_glyclase/AP_lyase"/>
</dbReference>
<dbReference type="InterPro" id="IPR010663">
    <property type="entry name" value="Znf_FPG/IleRS"/>
</dbReference>
<dbReference type="NCBIfam" id="TIGR00577">
    <property type="entry name" value="fpg"/>
    <property type="match status" value="1"/>
</dbReference>
<dbReference type="NCBIfam" id="NF002211">
    <property type="entry name" value="PRK01103.1"/>
    <property type="match status" value="1"/>
</dbReference>
<dbReference type="PANTHER" id="PTHR22993">
    <property type="entry name" value="FORMAMIDOPYRIMIDINE-DNA GLYCOSYLASE"/>
    <property type="match status" value="1"/>
</dbReference>
<dbReference type="PANTHER" id="PTHR22993:SF9">
    <property type="entry name" value="FORMAMIDOPYRIMIDINE-DNA GLYCOSYLASE"/>
    <property type="match status" value="1"/>
</dbReference>
<dbReference type="Pfam" id="PF01149">
    <property type="entry name" value="Fapy_DNA_glyco"/>
    <property type="match status" value="1"/>
</dbReference>
<dbReference type="Pfam" id="PF06831">
    <property type="entry name" value="H2TH"/>
    <property type="match status" value="1"/>
</dbReference>
<dbReference type="Pfam" id="PF06827">
    <property type="entry name" value="zf-FPG_IleRS"/>
    <property type="match status" value="1"/>
</dbReference>
<dbReference type="SMART" id="SM00898">
    <property type="entry name" value="Fapy_DNA_glyco"/>
    <property type="match status" value="1"/>
</dbReference>
<dbReference type="SMART" id="SM01232">
    <property type="entry name" value="H2TH"/>
    <property type="match status" value="1"/>
</dbReference>
<dbReference type="SUPFAM" id="SSF57716">
    <property type="entry name" value="Glucocorticoid receptor-like (DNA-binding domain)"/>
    <property type="match status" value="1"/>
</dbReference>
<dbReference type="SUPFAM" id="SSF81624">
    <property type="entry name" value="N-terminal domain of MutM-like DNA repair proteins"/>
    <property type="match status" value="1"/>
</dbReference>
<dbReference type="SUPFAM" id="SSF46946">
    <property type="entry name" value="S13-like H2TH domain"/>
    <property type="match status" value="1"/>
</dbReference>
<dbReference type="PROSITE" id="PS51068">
    <property type="entry name" value="FPG_CAT"/>
    <property type="match status" value="1"/>
</dbReference>
<dbReference type="PROSITE" id="PS01242">
    <property type="entry name" value="ZF_FPG_1"/>
    <property type="match status" value="1"/>
</dbReference>
<dbReference type="PROSITE" id="PS51066">
    <property type="entry name" value="ZF_FPG_2"/>
    <property type="match status" value="1"/>
</dbReference>
<organism>
    <name type="scientific">Burkholderia lata (strain ATCC 17760 / DSM 23089 / LMG 22485 / NCIMB 9086 / R18194 / 383)</name>
    <dbReference type="NCBI Taxonomy" id="482957"/>
    <lineage>
        <taxon>Bacteria</taxon>
        <taxon>Pseudomonadati</taxon>
        <taxon>Pseudomonadota</taxon>
        <taxon>Betaproteobacteria</taxon>
        <taxon>Burkholderiales</taxon>
        <taxon>Burkholderiaceae</taxon>
        <taxon>Burkholderia</taxon>
        <taxon>Burkholderia cepacia complex</taxon>
    </lineage>
</organism>
<protein>
    <recommendedName>
        <fullName evidence="2">Formamidopyrimidine-DNA glycosylase</fullName>
        <shortName evidence="2">Fapy-DNA glycosylase</shortName>
        <ecNumber evidence="2">3.2.2.23</ecNumber>
    </recommendedName>
    <alternativeName>
        <fullName evidence="2">DNA-(apurinic or apyrimidinic site) lyase MutM</fullName>
        <shortName evidence="2">AP lyase MutM</shortName>
        <ecNumber evidence="2">4.2.99.18</ecNumber>
    </alternativeName>
</protein>